<protein>
    <recommendedName>
        <fullName evidence="1">Aspartate--tRNA(Asp) ligase</fullName>
        <ecNumber evidence="1">6.1.1.12</ecNumber>
    </recommendedName>
    <alternativeName>
        <fullName evidence="1">Aspartyl-tRNA synthetase</fullName>
        <shortName evidence="1">AspRS</shortName>
    </alternativeName>
    <alternativeName>
        <fullName evidence="1">Discriminating aspartyl-tRNA synthetase</fullName>
        <shortName evidence="1">D-AspRS</shortName>
    </alternativeName>
</protein>
<name>SYD_PYRHO</name>
<comment type="function">
    <text evidence="1">Catalyzes the attachment of L-aspartate to tRNA(Asp) in a two-step reaction: L-aspartate is first activated by ATP to form Asp-AMP and then transferred to the acceptor end of tRNA(Asp).</text>
</comment>
<comment type="catalytic activity">
    <reaction evidence="1">
        <text>tRNA(Asp) + L-aspartate + ATP = L-aspartyl-tRNA(Asp) + AMP + diphosphate</text>
        <dbReference type="Rhea" id="RHEA:19649"/>
        <dbReference type="Rhea" id="RHEA-COMP:9660"/>
        <dbReference type="Rhea" id="RHEA-COMP:9678"/>
        <dbReference type="ChEBI" id="CHEBI:29991"/>
        <dbReference type="ChEBI" id="CHEBI:30616"/>
        <dbReference type="ChEBI" id="CHEBI:33019"/>
        <dbReference type="ChEBI" id="CHEBI:78442"/>
        <dbReference type="ChEBI" id="CHEBI:78516"/>
        <dbReference type="ChEBI" id="CHEBI:456215"/>
        <dbReference type="EC" id="6.1.1.12"/>
    </reaction>
</comment>
<comment type="cofactor">
    <cofactor evidence="1">
        <name>Mg(2+)</name>
        <dbReference type="ChEBI" id="CHEBI:18420"/>
    </cofactor>
    <text evidence="1">Binds 3 Mg(2+) cations per subunit. The strongest magnesium site (Mg1) is bound to the beta- and gamma-phosphates of ATP and four water molecules complete its coordination sphere.</text>
</comment>
<comment type="subunit">
    <text evidence="1">Homodimer.</text>
</comment>
<comment type="subcellular location">
    <subcellularLocation>
        <location evidence="1">Cytoplasm</location>
    </subcellularLocation>
</comment>
<comment type="similarity">
    <text evidence="1">Belongs to the class-II aminoacyl-tRNA synthetase family. Type 2 subfamily.</text>
</comment>
<organism>
    <name type="scientific">Pyrococcus horikoshii (strain ATCC 700860 / DSM 12428 / JCM 9974 / NBRC 100139 / OT-3)</name>
    <dbReference type="NCBI Taxonomy" id="70601"/>
    <lineage>
        <taxon>Archaea</taxon>
        <taxon>Methanobacteriati</taxon>
        <taxon>Methanobacteriota</taxon>
        <taxon>Thermococci</taxon>
        <taxon>Thermococcales</taxon>
        <taxon>Thermococcaceae</taxon>
        <taxon>Pyrococcus</taxon>
    </lineage>
</organism>
<evidence type="ECO:0000255" key="1">
    <source>
        <dbReference type="HAMAP-Rule" id="MF_02075"/>
    </source>
</evidence>
<sequence length="438" mass="50869">MLRTHYSNEITEELNGKRVKVAGWVQEVKDLGGIKFIWIRDREGIVQVTAPKKKVSQEIFKLIPKLNSEDVIVVEGIVNFTPKAKLGFEVIPEKLEVISRAKTPLPLDPTGKVKAELDTRLDNRFMDLRNPKVMAIFKIRSSVFRAVREFFYSEGFIEIHTPKIIATATEGGTELFPLKYFERDAFLAQSPQLYKQMMMATGLDKVFEIAPIFRAEEHNTTRHLNEAWSIDAEMAFIENEGEVMDLLERLISYVINYVREHNEKELKTLEFELNEPKRPFPRITYDKALEILSDLGKEIPWGEDIDTEGEKLLGKYMAENEGADLYFIYRYPSEAKPFYIMKYDEKPEVCRAFDLEYRGVEISSGGQREHRHDVLLEQIKEKGLNPKSFEFYLKAFEYGMPPHGGFGLGAERLIMRMLDIGNIREVILFPRDRRRLVP</sequence>
<dbReference type="EC" id="6.1.1.12" evidence="1"/>
<dbReference type="EMBL" id="BA000001">
    <property type="protein sequence ID" value="BAA30117.1"/>
    <property type="molecule type" value="Genomic_DNA"/>
</dbReference>
<dbReference type="PIR" id="G71094">
    <property type="entry name" value="G71094"/>
</dbReference>
<dbReference type="RefSeq" id="WP_010885107.1">
    <property type="nucleotide sequence ID" value="NC_000961.1"/>
</dbReference>
<dbReference type="SMR" id="O58776"/>
<dbReference type="IntAct" id="O58776">
    <property type="interactions" value="1"/>
</dbReference>
<dbReference type="MINT" id="O58776"/>
<dbReference type="STRING" id="70601.gene:9377977"/>
<dbReference type="EnsemblBacteria" id="BAA30117">
    <property type="protein sequence ID" value="BAA30117"/>
    <property type="gene ID" value="BAA30117"/>
</dbReference>
<dbReference type="GeneID" id="1443342"/>
<dbReference type="KEGG" id="pho:PH1020"/>
<dbReference type="eggNOG" id="arCOG00406">
    <property type="taxonomic scope" value="Archaea"/>
</dbReference>
<dbReference type="OrthoDB" id="5908at2157"/>
<dbReference type="Proteomes" id="UP000000752">
    <property type="component" value="Chromosome"/>
</dbReference>
<dbReference type="GO" id="GO:0017101">
    <property type="term" value="C:aminoacyl-tRNA synthetase multienzyme complex"/>
    <property type="evidence" value="ECO:0007669"/>
    <property type="project" value="TreeGrafter"/>
</dbReference>
<dbReference type="GO" id="GO:0005829">
    <property type="term" value="C:cytosol"/>
    <property type="evidence" value="ECO:0007669"/>
    <property type="project" value="TreeGrafter"/>
</dbReference>
<dbReference type="GO" id="GO:0004815">
    <property type="term" value="F:aspartate-tRNA ligase activity"/>
    <property type="evidence" value="ECO:0007669"/>
    <property type="project" value="UniProtKB-UniRule"/>
</dbReference>
<dbReference type="GO" id="GO:0005524">
    <property type="term" value="F:ATP binding"/>
    <property type="evidence" value="ECO:0007669"/>
    <property type="project" value="UniProtKB-UniRule"/>
</dbReference>
<dbReference type="GO" id="GO:0000287">
    <property type="term" value="F:magnesium ion binding"/>
    <property type="evidence" value="ECO:0007669"/>
    <property type="project" value="UniProtKB-UniRule"/>
</dbReference>
<dbReference type="GO" id="GO:0003723">
    <property type="term" value="F:RNA binding"/>
    <property type="evidence" value="ECO:0007669"/>
    <property type="project" value="TreeGrafter"/>
</dbReference>
<dbReference type="GO" id="GO:0006422">
    <property type="term" value="P:aspartyl-tRNA aminoacylation"/>
    <property type="evidence" value="ECO:0007669"/>
    <property type="project" value="UniProtKB-UniRule"/>
</dbReference>
<dbReference type="CDD" id="cd00776">
    <property type="entry name" value="AsxRS_core"/>
    <property type="match status" value="1"/>
</dbReference>
<dbReference type="CDD" id="cd04316">
    <property type="entry name" value="ND_PkAspRS_like_N"/>
    <property type="match status" value="1"/>
</dbReference>
<dbReference type="FunFam" id="3.30.930.10:FF:000038">
    <property type="entry name" value="Aspartate--tRNA ligase"/>
    <property type="match status" value="1"/>
</dbReference>
<dbReference type="FunFam" id="2.40.50.140:FF:000324">
    <property type="entry name" value="Aspartate--tRNA(Asp/Asn) ligase"/>
    <property type="match status" value="1"/>
</dbReference>
<dbReference type="Gene3D" id="3.30.930.10">
    <property type="entry name" value="Bira Bifunctional Protein, Domain 2"/>
    <property type="match status" value="1"/>
</dbReference>
<dbReference type="Gene3D" id="2.40.50.140">
    <property type="entry name" value="Nucleic acid-binding proteins"/>
    <property type="match status" value="1"/>
</dbReference>
<dbReference type="HAMAP" id="MF_02075">
    <property type="entry name" value="Asp_tRNA_synth_type2"/>
    <property type="match status" value="1"/>
</dbReference>
<dbReference type="InterPro" id="IPR004364">
    <property type="entry name" value="Aa-tRNA-synt_II"/>
</dbReference>
<dbReference type="InterPro" id="IPR006195">
    <property type="entry name" value="aa-tRNA-synth_II"/>
</dbReference>
<dbReference type="InterPro" id="IPR045864">
    <property type="entry name" value="aa-tRNA-synth_II/BPL/LPL"/>
</dbReference>
<dbReference type="InterPro" id="IPR004523">
    <property type="entry name" value="Asp-tRNA_synthase_2"/>
</dbReference>
<dbReference type="InterPro" id="IPR002312">
    <property type="entry name" value="Asp/Asn-tRNA-synth_IIb"/>
</dbReference>
<dbReference type="InterPro" id="IPR012340">
    <property type="entry name" value="NA-bd_OB-fold"/>
</dbReference>
<dbReference type="InterPro" id="IPR004365">
    <property type="entry name" value="NA-bd_OB_tRNA"/>
</dbReference>
<dbReference type="NCBIfam" id="TIGR00458">
    <property type="entry name" value="aspS_nondisc"/>
    <property type="match status" value="1"/>
</dbReference>
<dbReference type="NCBIfam" id="NF003483">
    <property type="entry name" value="PRK05159.1"/>
    <property type="match status" value="1"/>
</dbReference>
<dbReference type="PANTHER" id="PTHR43450:SF1">
    <property type="entry name" value="ASPARTATE--TRNA LIGASE, CYTOPLASMIC"/>
    <property type="match status" value="1"/>
</dbReference>
<dbReference type="PANTHER" id="PTHR43450">
    <property type="entry name" value="ASPARTYL-TRNA SYNTHETASE"/>
    <property type="match status" value="1"/>
</dbReference>
<dbReference type="Pfam" id="PF00152">
    <property type="entry name" value="tRNA-synt_2"/>
    <property type="match status" value="1"/>
</dbReference>
<dbReference type="Pfam" id="PF01336">
    <property type="entry name" value="tRNA_anti-codon"/>
    <property type="match status" value="1"/>
</dbReference>
<dbReference type="PRINTS" id="PR01042">
    <property type="entry name" value="TRNASYNTHASP"/>
</dbReference>
<dbReference type="SUPFAM" id="SSF55681">
    <property type="entry name" value="Class II aaRS and biotin synthetases"/>
    <property type="match status" value="1"/>
</dbReference>
<dbReference type="SUPFAM" id="SSF50249">
    <property type="entry name" value="Nucleic acid-binding proteins"/>
    <property type="match status" value="1"/>
</dbReference>
<dbReference type="PROSITE" id="PS50862">
    <property type="entry name" value="AA_TRNA_LIGASE_II"/>
    <property type="match status" value="1"/>
</dbReference>
<reference key="1">
    <citation type="journal article" date="1998" name="DNA Res.">
        <title>Complete sequence and gene organization of the genome of a hyper-thermophilic archaebacterium, Pyrococcus horikoshii OT3.</title>
        <authorList>
            <person name="Kawarabayasi Y."/>
            <person name="Sawada M."/>
            <person name="Horikawa H."/>
            <person name="Haikawa Y."/>
            <person name="Hino Y."/>
            <person name="Yamamoto S."/>
            <person name="Sekine M."/>
            <person name="Baba S."/>
            <person name="Kosugi H."/>
            <person name="Hosoyama A."/>
            <person name="Nagai Y."/>
            <person name="Sakai M."/>
            <person name="Ogura K."/>
            <person name="Otsuka R."/>
            <person name="Nakazawa H."/>
            <person name="Takamiya M."/>
            <person name="Ohfuku Y."/>
            <person name="Funahashi T."/>
            <person name="Tanaka T."/>
            <person name="Kudoh Y."/>
            <person name="Yamazaki J."/>
            <person name="Kushida N."/>
            <person name="Oguchi A."/>
            <person name="Aoki K."/>
            <person name="Yoshizawa T."/>
            <person name="Nakamura Y."/>
            <person name="Robb F.T."/>
            <person name="Horikoshi K."/>
            <person name="Masuchi Y."/>
            <person name="Shizuya H."/>
            <person name="Kikuchi H."/>
        </authorList>
    </citation>
    <scope>NUCLEOTIDE SEQUENCE [LARGE SCALE GENOMIC DNA]</scope>
    <source>
        <strain>ATCC 700860 / DSM 12428 / JCM 9974 / NBRC 100139 / OT-3</strain>
    </source>
</reference>
<accession>O58776</accession>
<gene>
    <name evidence="1" type="primary">aspS</name>
    <name type="ordered locus">PH1020</name>
</gene>
<feature type="chain" id="PRO_0000111004" description="Aspartate--tRNA(Asp) ligase">
    <location>
        <begin position="1"/>
        <end position="438"/>
    </location>
</feature>
<feature type="region of interest" description="Aspartate" evidence="1">
    <location>
        <begin position="192"/>
        <end position="195"/>
    </location>
</feature>
<feature type="binding site" evidence="1">
    <location>
        <position position="170"/>
    </location>
    <ligand>
        <name>L-aspartate</name>
        <dbReference type="ChEBI" id="CHEBI:29991"/>
    </ligand>
</feature>
<feature type="binding site" evidence="1">
    <location>
        <begin position="214"/>
        <end position="216"/>
    </location>
    <ligand>
        <name>ATP</name>
        <dbReference type="ChEBI" id="CHEBI:30616"/>
    </ligand>
</feature>
<feature type="binding site" evidence="1">
    <location>
        <position position="214"/>
    </location>
    <ligand>
        <name>L-aspartate</name>
        <dbReference type="ChEBI" id="CHEBI:29991"/>
    </ligand>
</feature>
<feature type="binding site" evidence="1">
    <location>
        <begin position="222"/>
        <end position="224"/>
    </location>
    <ligand>
        <name>ATP</name>
        <dbReference type="ChEBI" id="CHEBI:30616"/>
    </ligand>
</feature>
<feature type="binding site" evidence="1">
    <location>
        <position position="361"/>
    </location>
    <ligand>
        <name>ATP</name>
        <dbReference type="ChEBI" id="CHEBI:30616"/>
    </ligand>
</feature>
<feature type="binding site" evidence="1">
    <location>
        <position position="361"/>
    </location>
    <ligand>
        <name>Mg(2+)</name>
        <dbReference type="ChEBI" id="CHEBI:18420"/>
        <label>2</label>
    </ligand>
</feature>
<feature type="binding site" evidence="1">
    <location>
        <position position="361"/>
    </location>
    <ligand>
        <name>Mg(2+)</name>
        <dbReference type="ChEBI" id="CHEBI:18420"/>
        <label>3</label>
    </ligand>
</feature>
<feature type="binding site" evidence="1">
    <location>
        <position position="364"/>
    </location>
    <ligand>
        <name>L-aspartate</name>
        <dbReference type="ChEBI" id="CHEBI:29991"/>
    </ligand>
</feature>
<feature type="binding site" evidence="1">
    <location>
        <position position="364"/>
    </location>
    <ligand>
        <name>Mg(2+)</name>
        <dbReference type="ChEBI" id="CHEBI:18420"/>
        <label>2</label>
    </ligand>
</feature>
<feature type="binding site" evidence="1">
    <location>
        <position position="368"/>
    </location>
    <ligand>
        <name>L-aspartate</name>
        <dbReference type="ChEBI" id="CHEBI:29991"/>
    </ligand>
</feature>
<feature type="binding site" evidence="1">
    <location>
        <begin position="409"/>
        <end position="412"/>
    </location>
    <ligand>
        <name>ATP</name>
        <dbReference type="ChEBI" id="CHEBI:30616"/>
    </ligand>
</feature>
<feature type="site" description="Important for tRNA discrimination" evidence="1">
    <location>
        <position position="85"/>
    </location>
</feature>
<proteinExistence type="inferred from homology"/>
<keyword id="KW-0030">Aminoacyl-tRNA synthetase</keyword>
<keyword id="KW-0067">ATP-binding</keyword>
<keyword id="KW-0963">Cytoplasm</keyword>
<keyword id="KW-0436">Ligase</keyword>
<keyword id="KW-0460">Magnesium</keyword>
<keyword id="KW-0479">Metal-binding</keyword>
<keyword id="KW-0547">Nucleotide-binding</keyword>
<keyword id="KW-0648">Protein biosynthesis</keyword>